<proteinExistence type="inferred from homology"/>
<sequence length="487" mass="53223">MKDILKLSIAEMHDKLKKREFSAVELTKLHIEAVDNEKLNAFVTKTPEIALSAAEKADHIFTHQQENLTPLTGIPVGIKDLFCTKNVRTTACSNILKNFIPQYDSTVTKLLLNNGAVMLGKLNMDEFAMGSSNSNSCFGNVKNPWIRADGAEVVPGGSSGGSSAAVAGFLCAGALGSDTGGSVRQPAAFCGIVGLKPTYGRCSRLGMIAFASSLDQAGVLTRTVEDSALMLQSICGYDTQDPTSVNINVPKFSESITHKIKGTRIGIPKEYELSEKHKEYAEISEMWSKGIQYLKDEGAEIIEISLPHTSYALPVYYIICSAEASSNLARYDGIRYGTRISSDDINEMYKLTRGYNFGTEVKRRILIGAYALSSGYYDAYYNKAQCIRRLVTNDFIESFKKIDYILTPTAPKEAFSINEQLDTLTMYLNDVFTVPASLAGLPAISVPIGLSKNNLPLSLQIIGNYYDEGGILNLASIIEKHTGRILK</sequence>
<protein>
    <recommendedName>
        <fullName evidence="1">Glutamyl-tRNA(Gln) amidotransferase subunit A</fullName>
        <shortName evidence="1">Glu-ADT subunit A</shortName>
        <ecNumber evidence="1">6.3.5.7</ecNumber>
    </recommendedName>
</protein>
<keyword id="KW-0067">ATP-binding</keyword>
<keyword id="KW-0436">Ligase</keyword>
<keyword id="KW-0547">Nucleotide-binding</keyword>
<keyword id="KW-0648">Protein biosynthesis</keyword>
<name>GATA_EHRCJ</name>
<evidence type="ECO:0000255" key="1">
    <source>
        <dbReference type="HAMAP-Rule" id="MF_00120"/>
    </source>
</evidence>
<evidence type="ECO:0000305" key="2"/>
<organism>
    <name type="scientific">Ehrlichia canis (strain Jake)</name>
    <dbReference type="NCBI Taxonomy" id="269484"/>
    <lineage>
        <taxon>Bacteria</taxon>
        <taxon>Pseudomonadati</taxon>
        <taxon>Pseudomonadota</taxon>
        <taxon>Alphaproteobacteria</taxon>
        <taxon>Rickettsiales</taxon>
        <taxon>Anaplasmataceae</taxon>
        <taxon>Ehrlichia</taxon>
    </lineage>
</organism>
<dbReference type="EC" id="6.3.5.7" evidence="1"/>
<dbReference type="EMBL" id="CP000107">
    <property type="protein sequence ID" value="AAZ68395.1"/>
    <property type="status" value="ALT_INIT"/>
    <property type="molecule type" value="Genomic_DNA"/>
</dbReference>
<dbReference type="RefSeq" id="WP_044261964.1">
    <property type="nucleotide sequence ID" value="NC_007354.1"/>
</dbReference>
<dbReference type="SMR" id="Q3YSB0"/>
<dbReference type="STRING" id="269484.Ecaj_0352"/>
<dbReference type="KEGG" id="ecn:Ecaj_0352"/>
<dbReference type="eggNOG" id="COG0154">
    <property type="taxonomic scope" value="Bacteria"/>
</dbReference>
<dbReference type="HOGENOM" id="CLU_009600_0_3_5"/>
<dbReference type="InParanoid" id="Q3YSB0"/>
<dbReference type="Proteomes" id="UP000000435">
    <property type="component" value="Chromosome"/>
</dbReference>
<dbReference type="GO" id="GO:0030956">
    <property type="term" value="C:glutamyl-tRNA(Gln) amidotransferase complex"/>
    <property type="evidence" value="ECO:0007669"/>
    <property type="project" value="InterPro"/>
</dbReference>
<dbReference type="GO" id="GO:0005524">
    <property type="term" value="F:ATP binding"/>
    <property type="evidence" value="ECO:0007669"/>
    <property type="project" value="UniProtKB-KW"/>
</dbReference>
<dbReference type="GO" id="GO:0050567">
    <property type="term" value="F:glutaminyl-tRNA synthase (glutamine-hydrolyzing) activity"/>
    <property type="evidence" value="ECO:0007669"/>
    <property type="project" value="UniProtKB-UniRule"/>
</dbReference>
<dbReference type="GO" id="GO:0006412">
    <property type="term" value="P:translation"/>
    <property type="evidence" value="ECO:0007669"/>
    <property type="project" value="UniProtKB-UniRule"/>
</dbReference>
<dbReference type="Gene3D" id="3.90.1300.10">
    <property type="entry name" value="Amidase signature (AS) domain"/>
    <property type="match status" value="1"/>
</dbReference>
<dbReference type="HAMAP" id="MF_00120">
    <property type="entry name" value="GatA"/>
    <property type="match status" value="1"/>
</dbReference>
<dbReference type="InterPro" id="IPR000120">
    <property type="entry name" value="Amidase"/>
</dbReference>
<dbReference type="InterPro" id="IPR020556">
    <property type="entry name" value="Amidase_CS"/>
</dbReference>
<dbReference type="InterPro" id="IPR023631">
    <property type="entry name" value="Amidase_dom"/>
</dbReference>
<dbReference type="InterPro" id="IPR036928">
    <property type="entry name" value="AS_sf"/>
</dbReference>
<dbReference type="InterPro" id="IPR004412">
    <property type="entry name" value="GatA"/>
</dbReference>
<dbReference type="NCBIfam" id="TIGR00132">
    <property type="entry name" value="gatA"/>
    <property type="match status" value="1"/>
</dbReference>
<dbReference type="PANTHER" id="PTHR11895:SF151">
    <property type="entry name" value="GLUTAMYL-TRNA(GLN) AMIDOTRANSFERASE SUBUNIT A"/>
    <property type="match status" value="1"/>
</dbReference>
<dbReference type="PANTHER" id="PTHR11895">
    <property type="entry name" value="TRANSAMIDASE"/>
    <property type="match status" value="1"/>
</dbReference>
<dbReference type="Pfam" id="PF01425">
    <property type="entry name" value="Amidase"/>
    <property type="match status" value="1"/>
</dbReference>
<dbReference type="SUPFAM" id="SSF75304">
    <property type="entry name" value="Amidase signature (AS) enzymes"/>
    <property type="match status" value="1"/>
</dbReference>
<dbReference type="PROSITE" id="PS00571">
    <property type="entry name" value="AMIDASES"/>
    <property type="match status" value="1"/>
</dbReference>
<reference key="1">
    <citation type="journal article" date="2006" name="J. Bacteriol.">
        <title>The genome of the obligately intracellular bacterium Ehrlichia canis reveals themes of complex membrane structure and immune evasion strategies.</title>
        <authorList>
            <person name="Mavromatis K."/>
            <person name="Doyle C.K."/>
            <person name="Lykidis A."/>
            <person name="Ivanova N."/>
            <person name="Francino M.P."/>
            <person name="Chain P."/>
            <person name="Shin M."/>
            <person name="Malfatti S."/>
            <person name="Larimer F."/>
            <person name="Copeland A."/>
            <person name="Detter J.C."/>
            <person name="Land M."/>
            <person name="Richardson P.M."/>
            <person name="Yu X.J."/>
            <person name="Walker D.H."/>
            <person name="McBride J.W."/>
            <person name="Kyrpides N.C."/>
        </authorList>
    </citation>
    <scope>NUCLEOTIDE SEQUENCE [LARGE SCALE GENOMIC DNA]</scope>
    <source>
        <strain>Jake</strain>
    </source>
</reference>
<accession>Q3YSB0</accession>
<comment type="function">
    <text evidence="1">Allows the formation of correctly charged Gln-tRNA(Gln) through the transamidation of misacylated Glu-tRNA(Gln) in organisms which lack glutaminyl-tRNA synthetase. The reaction takes place in the presence of glutamine and ATP through an activated gamma-phospho-Glu-tRNA(Gln).</text>
</comment>
<comment type="catalytic activity">
    <reaction evidence="1">
        <text>L-glutamyl-tRNA(Gln) + L-glutamine + ATP + H2O = L-glutaminyl-tRNA(Gln) + L-glutamate + ADP + phosphate + H(+)</text>
        <dbReference type="Rhea" id="RHEA:17521"/>
        <dbReference type="Rhea" id="RHEA-COMP:9681"/>
        <dbReference type="Rhea" id="RHEA-COMP:9684"/>
        <dbReference type="ChEBI" id="CHEBI:15377"/>
        <dbReference type="ChEBI" id="CHEBI:15378"/>
        <dbReference type="ChEBI" id="CHEBI:29985"/>
        <dbReference type="ChEBI" id="CHEBI:30616"/>
        <dbReference type="ChEBI" id="CHEBI:43474"/>
        <dbReference type="ChEBI" id="CHEBI:58359"/>
        <dbReference type="ChEBI" id="CHEBI:78520"/>
        <dbReference type="ChEBI" id="CHEBI:78521"/>
        <dbReference type="ChEBI" id="CHEBI:456216"/>
        <dbReference type="EC" id="6.3.5.7"/>
    </reaction>
</comment>
<comment type="subunit">
    <text evidence="1">Heterotrimer of A, B and C subunits.</text>
</comment>
<comment type="similarity">
    <text evidence="1">Belongs to the amidase family. GatA subfamily.</text>
</comment>
<comment type="sequence caution" evidence="2">
    <conflict type="erroneous initiation">
        <sequence resource="EMBL-CDS" id="AAZ68395"/>
    </conflict>
</comment>
<gene>
    <name evidence="1" type="primary">gatA</name>
    <name type="ordered locus">Ecaj_0352</name>
</gene>
<feature type="chain" id="PRO_0000241098" description="Glutamyl-tRNA(Gln) amidotransferase subunit A">
    <location>
        <begin position="1"/>
        <end position="487"/>
    </location>
</feature>
<feature type="active site" description="Charge relay system" evidence="1">
    <location>
        <position position="79"/>
    </location>
</feature>
<feature type="active site" description="Charge relay system" evidence="1">
    <location>
        <position position="158"/>
    </location>
</feature>
<feature type="active site" description="Acyl-ester intermediate" evidence="1">
    <location>
        <position position="182"/>
    </location>
</feature>